<gene>
    <name evidence="1" type="primary">rnz</name>
    <name type="ordered locus">Aflv_0979</name>
</gene>
<reference key="1">
    <citation type="journal article" date="2008" name="Genome Biol.">
        <title>Encapsulated in silica: genome, proteome and physiology of the thermophilic bacterium Anoxybacillus flavithermus WK1.</title>
        <authorList>
            <person name="Saw J.H."/>
            <person name="Mountain B.W."/>
            <person name="Feng L."/>
            <person name="Omelchenko M.V."/>
            <person name="Hou S."/>
            <person name="Saito J.A."/>
            <person name="Stott M.B."/>
            <person name="Li D."/>
            <person name="Zhao G."/>
            <person name="Wu J."/>
            <person name="Galperin M.Y."/>
            <person name="Koonin E.V."/>
            <person name="Makarova K.S."/>
            <person name="Wolf Y.I."/>
            <person name="Rigden D.J."/>
            <person name="Dunfield P.F."/>
            <person name="Wang L."/>
            <person name="Alam M."/>
        </authorList>
    </citation>
    <scope>NUCLEOTIDE SEQUENCE [LARGE SCALE GENOMIC DNA]</scope>
    <source>
        <strain>DSM 21510 / WK1</strain>
    </source>
</reference>
<keyword id="KW-0255">Endonuclease</keyword>
<keyword id="KW-0378">Hydrolase</keyword>
<keyword id="KW-0479">Metal-binding</keyword>
<keyword id="KW-0540">Nuclease</keyword>
<keyword id="KW-0819">tRNA processing</keyword>
<keyword id="KW-0862">Zinc</keyword>
<accession>B7GHJ4</accession>
<name>RNZ_ANOFW</name>
<dbReference type="EC" id="3.1.26.11" evidence="1"/>
<dbReference type="EMBL" id="CP000922">
    <property type="protein sequence ID" value="ACJ33355.1"/>
    <property type="molecule type" value="Genomic_DNA"/>
</dbReference>
<dbReference type="RefSeq" id="WP_012574628.1">
    <property type="nucleotide sequence ID" value="NC_011567.1"/>
</dbReference>
<dbReference type="SMR" id="B7GHJ4"/>
<dbReference type="STRING" id="491915.Aflv_0979"/>
<dbReference type="GeneID" id="7037236"/>
<dbReference type="KEGG" id="afl:Aflv_0979"/>
<dbReference type="PATRIC" id="fig|491915.6.peg.998"/>
<dbReference type="eggNOG" id="COG1234">
    <property type="taxonomic scope" value="Bacteria"/>
</dbReference>
<dbReference type="HOGENOM" id="CLU_031317_2_0_9"/>
<dbReference type="Proteomes" id="UP000000742">
    <property type="component" value="Chromosome"/>
</dbReference>
<dbReference type="GO" id="GO:0042781">
    <property type="term" value="F:3'-tRNA processing endoribonuclease activity"/>
    <property type="evidence" value="ECO:0007669"/>
    <property type="project" value="UniProtKB-UniRule"/>
</dbReference>
<dbReference type="GO" id="GO:0008270">
    <property type="term" value="F:zinc ion binding"/>
    <property type="evidence" value="ECO:0007669"/>
    <property type="project" value="UniProtKB-UniRule"/>
</dbReference>
<dbReference type="CDD" id="cd07717">
    <property type="entry name" value="RNaseZ_ZiPD-like_MBL-fold"/>
    <property type="match status" value="1"/>
</dbReference>
<dbReference type="FunFam" id="3.60.15.10:FF:000002">
    <property type="entry name" value="Ribonuclease Z"/>
    <property type="match status" value="1"/>
</dbReference>
<dbReference type="Gene3D" id="3.60.15.10">
    <property type="entry name" value="Ribonuclease Z/Hydroxyacylglutathione hydrolase-like"/>
    <property type="match status" value="1"/>
</dbReference>
<dbReference type="HAMAP" id="MF_01818">
    <property type="entry name" value="RNase_Z_BN"/>
    <property type="match status" value="1"/>
</dbReference>
<dbReference type="InterPro" id="IPR001279">
    <property type="entry name" value="Metallo-B-lactamas"/>
</dbReference>
<dbReference type="InterPro" id="IPR036866">
    <property type="entry name" value="RibonucZ/Hydroxyglut_hydro"/>
</dbReference>
<dbReference type="InterPro" id="IPR013471">
    <property type="entry name" value="RNase_Z/BN"/>
</dbReference>
<dbReference type="NCBIfam" id="NF000800">
    <property type="entry name" value="PRK00055.1-1"/>
    <property type="match status" value="1"/>
</dbReference>
<dbReference type="NCBIfam" id="NF000801">
    <property type="entry name" value="PRK00055.1-3"/>
    <property type="match status" value="1"/>
</dbReference>
<dbReference type="NCBIfam" id="TIGR02651">
    <property type="entry name" value="RNase_Z"/>
    <property type="match status" value="1"/>
</dbReference>
<dbReference type="PANTHER" id="PTHR46018">
    <property type="entry name" value="ZINC PHOSPHODIESTERASE ELAC PROTEIN 1"/>
    <property type="match status" value="1"/>
</dbReference>
<dbReference type="PANTHER" id="PTHR46018:SF2">
    <property type="entry name" value="ZINC PHOSPHODIESTERASE ELAC PROTEIN 1"/>
    <property type="match status" value="1"/>
</dbReference>
<dbReference type="Pfam" id="PF00753">
    <property type="entry name" value="Lactamase_B"/>
    <property type="match status" value="1"/>
</dbReference>
<dbReference type="Pfam" id="PF12706">
    <property type="entry name" value="Lactamase_B_2"/>
    <property type="match status" value="1"/>
</dbReference>
<dbReference type="SUPFAM" id="SSF56281">
    <property type="entry name" value="Metallo-hydrolase/oxidoreductase"/>
    <property type="match status" value="1"/>
</dbReference>
<sequence length="312" mass="34514">MELLFLGTGSGVPSKGRNVSAVALQLLEERGATWLFDCGEATQHQILHTSIRPRRIERIFITHLHGDHIFGLPGLLGSRSFQGGETPLFVYGPAGIRSFVETALAVSGTRLKYELYIEEFTEGVIFEDEQFIVTAKLLDHGLPSYGFRIVEKDLPGTLLVDELRALGVKPGPIYQQIKRGEVVTLDDGTVIDGRKFVAPPKKGRMIAIMGDTRYCEASVELAEGVDVLVHEATFSANEAHLARDYYHSTTVQAAEVAKRARAKQLILTHISSRYQGEMCDQLVEEAKTIFPNVALASDFSSFSIIRKGHDER</sequence>
<proteinExistence type="inferred from homology"/>
<organism>
    <name type="scientific">Anoxybacillus flavithermus (strain DSM 21510 / WK1)</name>
    <dbReference type="NCBI Taxonomy" id="491915"/>
    <lineage>
        <taxon>Bacteria</taxon>
        <taxon>Bacillati</taxon>
        <taxon>Bacillota</taxon>
        <taxon>Bacilli</taxon>
        <taxon>Bacillales</taxon>
        <taxon>Anoxybacillaceae</taxon>
        <taxon>Anoxybacillus</taxon>
    </lineage>
</organism>
<feature type="chain" id="PRO_1000187926" description="Ribonuclease Z">
    <location>
        <begin position="1"/>
        <end position="312"/>
    </location>
</feature>
<feature type="active site" description="Proton acceptor" evidence="1">
    <location>
        <position position="67"/>
    </location>
</feature>
<feature type="binding site" evidence="1">
    <location>
        <position position="63"/>
    </location>
    <ligand>
        <name>Zn(2+)</name>
        <dbReference type="ChEBI" id="CHEBI:29105"/>
        <label>1</label>
        <note>catalytic</note>
    </ligand>
</feature>
<feature type="binding site" evidence="1">
    <location>
        <position position="65"/>
    </location>
    <ligand>
        <name>Zn(2+)</name>
        <dbReference type="ChEBI" id="CHEBI:29105"/>
        <label>1</label>
        <note>catalytic</note>
    </ligand>
</feature>
<feature type="binding site" evidence="1">
    <location>
        <position position="67"/>
    </location>
    <ligand>
        <name>Zn(2+)</name>
        <dbReference type="ChEBI" id="CHEBI:29105"/>
        <label>2</label>
        <note>catalytic</note>
    </ligand>
</feature>
<feature type="binding site" evidence="1">
    <location>
        <position position="68"/>
    </location>
    <ligand>
        <name>Zn(2+)</name>
        <dbReference type="ChEBI" id="CHEBI:29105"/>
        <label>2</label>
        <note>catalytic</note>
    </ligand>
</feature>
<feature type="binding site" evidence="1">
    <location>
        <position position="140"/>
    </location>
    <ligand>
        <name>Zn(2+)</name>
        <dbReference type="ChEBI" id="CHEBI:29105"/>
        <label>1</label>
        <note>catalytic</note>
    </ligand>
</feature>
<feature type="binding site" evidence="1">
    <location>
        <position position="211"/>
    </location>
    <ligand>
        <name>Zn(2+)</name>
        <dbReference type="ChEBI" id="CHEBI:29105"/>
        <label>1</label>
        <note>catalytic</note>
    </ligand>
</feature>
<feature type="binding site" evidence="1">
    <location>
        <position position="211"/>
    </location>
    <ligand>
        <name>Zn(2+)</name>
        <dbReference type="ChEBI" id="CHEBI:29105"/>
        <label>2</label>
        <note>catalytic</note>
    </ligand>
</feature>
<feature type="binding site" evidence="1">
    <location>
        <position position="269"/>
    </location>
    <ligand>
        <name>Zn(2+)</name>
        <dbReference type="ChEBI" id="CHEBI:29105"/>
        <label>2</label>
        <note>catalytic</note>
    </ligand>
</feature>
<comment type="function">
    <text evidence="1">Zinc phosphodiesterase, which displays some tRNA 3'-processing endonuclease activity. Probably involved in tRNA maturation, by removing a 3'-trailer from precursor tRNA.</text>
</comment>
<comment type="catalytic activity">
    <reaction evidence="1">
        <text>Endonucleolytic cleavage of RNA, removing extra 3' nucleotides from tRNA precursor, generating 3' termini of tRNAs. A 3'-hydroxy group is left at the tRNA terminus and a 5'-phosphoryl group is left at the trailer molecule.</text>
        <dbReference type="EC" id="3.1.26.11"/>
    </reaction>
</comment>
<comment type="cofactor">
    <cofactor evidence="1">
        <name>Zn(2+)</name>
        <dbReference type="ChEBI" id="CHEBI:29105"/>
    </cofactor>
    <text evidence="1">Binds 2 Zn(2+) ions.</text>
</comment>
<comment type="subunit">
    <text evidence="1">Homodimer.</text>
</comment>
<comment type="similarity">
    <text evidence="1">Belongs to the RNase Z family.</text>
</comment>
<evidence type="ECO:0000255" key="1">
    <source>
        <dbReference type="HAMAP-Rule" id="MF_01818"/>
    </source>
</evidence>
<protein>
    <recommendedName>
        <fullName evidence="1">Ribonuclease Z</fullName>
        <shortName evidence="1">RNase Z</shortName>
        <ecNumber evidence="1">3.1.26.11</ecNumber>
    </recommendedName>
    <alternativeName>
        <fullName evidence="1">tRNA 3 endonuclease</fullName>
    </alternativeName>
    <alternativeName>
        <fullName evidence="1">tRNase Z</fullName>
    </alternativeName>
</protein>